<feature type="chain" id="PRO_0000061050" description="Cytochrome b">
    <location>
        <begin position="1"/>
        <end position="372"/>
    </location>
</feature>
<feature type="transmembrane region" description="Helical" evidence="2">
    <location>
        <begin position="25"/>
        <end position="45"/>
    </location>
</feature>
<feature type="transmembrane region" description="Helical" evidence="2">
    <location>
        <begin position="69"/>
        <end position="90"/>
    </location>
</feature>
<feature type="transmembrane region" description="Helical" evidence="2">
    <location>
        <begin position="105"/>
        <end position="125"/>
    </location>
</feature>
<feature type="transmembrane region" description="Helical" evidence="2">
    <location>
        <begin position="170"/>
        <end position="190"/>
    </location>
</feature>
<feature type="transmembrane region" description="Helical" evidence="2">
    <location>
        <begin position="218"/>
        <end position="238"/>
    </location>
</feature>
<feature type="transmembrane region" description="Helical" evidence="2">
    <location>
        <begin position="280"/>
        <end position="300"/>
    </location>
</feature>
<feature type="transmembrane region" description="Helical" evidence="2">
    <location>
        <begin position="312"/>
        <end position="332"/>
    </location>
</feature>
<feature type="transmembrane region" description="Helical" evidence="2">
    <location>
        <begin position="339"/>
        <end position="358"/>
    </location>
</feature>
<feature type="binding site" description="axial binding residue" evidence="2">
    <location>
        <position position="75"/>
    </location>
    <ligand>
        <name>heme b</name>
        <dbReference type="ChEBI" id="CHEBI:60344"/>
        <label>b562</label>
    </ligand>
    <ligandPart>
        <name>Fe</name>
        <dbReference type="ChEBI" id="CHEBI:18248"/>
    </ligandPart>
</feature>
<feature type="binding site" description="axial binding residue" evidence="2">
    <location>
        <position position="89"/>
    </location>
    <ligand>
        <name>heme b</name>
        <dbReference type="ChEBI" id="CHEBI:60344"/>
        <label>b566</label>
    </ligand>
    <ligandPart>
        <name>Fe</name>
        <dbReference type="ChEBI" id="CHEBI:18248"/>
    </ligandPart>
</feature>
<feature type="binding site" description="axial binding residue" evidence="2">
    <location>
        <position position="174"/>
    </location>
    <ligand>
        <name>heme b</name>
        <dbReference type="ChEBI" id="CHEBI:60344"/>
        <label>b562</label>
    </ligand>
    <ligandPart>
        <name>Fe</name>
        <dbReference type="ChEBI" id="CHEBI:18248"/>
    </ligandPart>
</feature>
<feature type="binding site" description="axial binding residue" evidence="2">
    <location>
        <position position="188"/>
    </location>
    <ligand>
        <name>heme b</name>
        <dbReference type="ChEBI" id="CHEBI:60344"/>
        <label>b566</label>
    </ligand>
    <ligandPart>
        <name>Fe</name>
        <dbReference type="ChEBI" id="CHEBI:18248"/>
    </ligandPart>
</feature>
<feature type="binding site" evidence="2">
    <location>
        <position position="193"/>
    </location>
    <ligand>
        <name>a ubiquinone</name>
        <dbReference type="ChEBI" id="CHEBI:16389"/>
    </ligand>
</feature>
<evidence type="ECO:0000250" key="1"/>
<evidence type="ECO:0000250" key="2">
    <source>
        <dbReference type="UniProtKB" id="P00157"/>
    </source>
</evidence>
<evidence type="ECO:0000255" key="3">
    <source>
        <dbReference type="PROSITE-ProRule" id="PRU00967"/>
    </source>
</evidence>
<evidence type="ECO:0000255" key="4">
    <source>
        <dbReference type="PROSITE-ProRule" id="PRU00968"/>
    </source>
</evidence>
<name>CYB_HYDSE</name>
<comment type="function">
    <text evidence="2">Component of the ubiquinol-cytochrome c reductase complex (complex III or cytochrome b-c1 complex) that is part of the mitochondrial respiratory chain. The b-c1 complex mediates electron transfer from ubiquinol to cytochrome c. Contributes to the generation of a proton gradient across the mitochondrial membrane that is then used for ATP synthesis.</text>
</comment>
<comment type="cofactor">
    <cofactor evidence="2">
        <name>heme b</name>
        <dbReference type="ChEBI" id="CHEBI:60344"/>
    </cofactor>
    <text evidence="2">Binds 2 heme b groups non-covalently.</text>
</comment>
<comment type="subunit">
    <text evidence="2">The cytochrome bc1 complex contains 3 respiratory subunits (MT-CYB, CYC1 and UQCRFS1), 2 core proteins (UQCRC1 and UQCRC2) and probably 6 low-molecular weight proteins.</text>
</comment>
<comment type="subcellular location">
    <subcellularLocation>
        <location evidence="2">Mitochondrion inner membrane</location>
        <topology evidence="2">Multi-pass membrane protein</topology>
    </subcellularLocation>
</comment>
<comment type="miscellaneous">
    <text evidence="1">Heme 1 (or BL or b562) is low-potential and absorbs at about 562 nm, and heme 2 (or BH or b566) is high-potential and absorbs at about 566 nm.</text>
</comment>
<comment type="similarity">
    <text evidence="3 4">Belongs to the cytochrome b family.</text>
</comment>
<comment type="caution">
    <text evidence="2">The full-length protein contains only eight transmembrane helices, not nine as predicted by bioinformatics tools.</text>
</comment>
<reference key="1">
    <citation type="journal article" date="2000" name="Mol. Phylogenet. Evol.">
        <title>Phylogenetic relationships of elapid snakes based on cytochrome b mtDNA sequences.</title>
        <authorList>
            <person name="Slowinski J.B."/>
            <person name="Keogh J.S."/>
        </authorList>
    </citation>
    <scope>NUCLEOTIDE SEQUENCE [GENOMIC DNA]</scope>
</reference>
<geneLocation type="mitochondrion"/>
<organism>
    <name type="scientific">Hydrophis semperi</name>
    <name type="common">Lake Taal snake</name>
    <name type="synonym">Leioselasma semperi</name>
    <dbReference type="NCBI Taxonomy" id="66179"/>
    <lineage>
        <taxon>Eukaryota</taxon>
        <taxon>Metazoa</taxon>
        <taxon>Chordata</taxon>
        <taxon>Craniata</taxon>
        <taxon>Vertebrata</taxon>
        <taxon>Euteleostomi</taxon>
        <taxon>Lepidosauria</taxon>
        <taxon>Squamata</taxon>
        <taxon>Bifurcata</taxon>
        <taxon>Unidentata</taxon>
        <taxon>Episquamata</taxon>
        <taxon>Toxicofera</taxon>
        <taxon>Serpentes</taxon>
        <taxon>Colubroidea</taxon>
        <taxon>Elapidae</taxon>
        <taxon>Hydrophiinae</taxon>
        <taxon>Hydrophis</taxon>
    </lineage>
</organism>
<gene>
    <name type="primary">MT-CYB</name>
    <name type="synonym">COB</name>
    <name type="synonym">CYTB</name>
    <name type="synonym">MTCYB</name>
</gene>
<accession>Q9MLK6</accession>
<dbReference type="EMBL" id="AF217822">
    <property type="protein sequence ID" value="AAF37241.1"/>
    <property type="molecule type" value="Genomic_DNA"/>
</dbReference>
<dbReference type="SMR" id="Q9MLK6"/>
<dbReference type="GO" id="GO:0005743">
    <property type="term" value="C:mitochondrial inner membrane"/>
    <property type="evidence" value="ECO:0007669"/>
    <property type="project" value="UniProtKB-SubCell"/>
</dbReference>
<dbReference type="GO" id="GO:0045275">
    <property type="term" value="C:respiratory chain complex III"/>
    <property type="evidence" value="ECO:0007669"/>
    <property type="project" value="InterPro"/>
</dbReference>
<dbReference type="GO" id="GO:0046872">
    <property type="term" value="F:metal ion binding"/>
    <property type="evidence" value="ECO:0007669"/>
    <property type="project" value="UniProtKB-KW"/>
</dbReference>
<dbReference type="GO" id="GO:0008121">
    <property type="term" value="F:ubiquinol-cytochrome-c reductase activity"/>
    <property type="evidence" value="ECO:0007669"/>
    <property type="project" value="InterPro"/>
</dbReference>
<dbReference type="GO" id="GO:0006122">
    <property type="term" value="P:mitochondrial electron transport, ubiquinol to cytochrome c"/>
    <property type="evidence" value="ECO:0007669"/>
    <property type="project" value="TreeGrafter"/>
</dbReference>
<dbReference type="CDD" id="cd00290">
    <property type="entry name" value="cytochrome_b_C"/>
    <property type="match status" value="1"/>
</dbReference>
<dbReference type="CDD" id="cd00284">
    <property type="entry name" value="Cytochrome_b_N"/>
    <property type="match status" value="1"/>
</dbReference>
<dbReference type="Gene3D" id="1.20.810.10">
    <property type="entry name" value="Cytochrome Bc1 Complex, Chain C"/>
    <property type="match status" value="1"/>
</dbReference>
<dbReference type="InterPro" id="IPR005798">
    <property type="entry name" value="Cyt_b/b6_C"/>
</dbReference>
<dbReference type="InterPro" id="IPR036150">
    <property type="entry name" value="Cyt_b/b6_C_sf"/>
</dbReference>
<dbReference type="InterPro" id="IPR005797">
    <property type="entry name" value="Cyt_b/b6_N"/>
</dbReference>
<dbReference type="InterPro" id="IPR027387">
    <property type="entry name" value="Cytb/b6-like_sf"/>
</dbReference>
<dbReference type="InterPro" id="IPR030689">
    <property type="entry name" value="Cytochrome_b"/>
</dbReference>
<dbReference type="InterPro" id="IPR048260">
    <property type="entry name" value="Cytochrome_b_C_euk/bac"/>
</dbReference>
<dbReference type="InterPro" id="IPR048259">
    <property type="entry name" value="Cytochrome_b_N_euk/bac"/>
</dbReference>
<dbReference type="InterPro" id="IPR016174">
    <property type="entry name" value="Di-haem_cyt_TM"/>
</dbReference>
<dbReference type="PANTHER" id="PTHR19271">
    <property type="entry name" value="CYTOCHROME B"/>
    <property type="match status" value="1"/>
</dbReference>
<dbReference type="PANTHER" id="PTHR19271:SF16">
    <property type="entry name" value="CYTOCHROME B"/>
    <property type="match status" value="1"/>
</dbReference>
<dbReference type="Pfam" id="PF00032">
    <property type="entry name" value="Cytochrom_B_C"/>
    <property type="match status" value="1"/>
</dbReference>
<dbReference type="Pfam" id="PF00033">
    <property type="entry name" value="Cytochrome_B"/>
    <property type="match status" value="1"/>
</dbReference>
<dbReference type="PIRSF" id="PIRSF038885">
    <property type="entry name" value="COB"/>
    <property type="match status" value="1"/>
</dbReference>
<dbReference type="SUPFAM" id="SSF81648">
    <property type="entry name" value="a domain/subunit of cytochrome bc1 complex (Ubiquinol-cytochrome c reductase)"/>
    <property type="match status" value="1"/>
</dbReference>
<dbReference type="SUPFAM" id="SSF81342">
    <property type="entry name" value="Transmembrane di-heme cytochromes"/>
    <property type="match status" value="1"/>
</dbReference>
<dbReference type="PROSITE" id="PS51003">
    <property type="entry name" value="CYTB_CTER"/>
    <property type="match status" value="1"/>
</dbReference>
<dbReference type="PROSITE" id="PS51002">
    <property type="entry name" value="CYTB_NTER"/>
    <property type="match status" value="1"/>
</dbReference>
<protein>
    <recommendedName>
        <fullName>Cytochrome b</fullName>
    </recommendedName>
    <alternativeName>
        <fullName>Complex III subunit 3</fullName>
    </alternativeName>
    <alternativeName>
        <fullName>Complex III subunit III</fullName>
    </alternativeName>
    <alternativeName>
        <fullName>Cytochrome b-c1 complex subunit 3</fullName>
    </alternativeName>
    <alternativeName>
        <fullName>Ubiquinol-cytochrome-c reductase complex cytochrome b subunit</fullName>
    </alternativeName>
</protein>
<proteinExistence type="inferred from homology"/>
<keyword id="KW-0249">Electron transport</keyword>
<keyword id="KW-0349">Heme</keyword>
<keyword id="KW-0408">Iron</keyword>
<keyword id="KW-0472">Membrane</keyword>
<keyword id="KW-0479">Metal-binding</keyword>
<keyword id="KW-0496">Mitochondrion</keyword>
<keyword id="KW-0999">Mitochondrion inner membrane</keyword>
<keyword id="KW-0679">Respiratory chain</keyword>
<keyword id="KW-0812">Transmembrane</keyword>
<keyword id="KW-1133">Transmembrane helix</keyword>
<keyword id="KW-0813">Transport</keyword>
<keyword id="KW-0830">Ubiquinone</keyword>
<sequence>MPNQHTLLSSNLLPVGSNISTWWNFGSMLLTCLALQTSTGFFLAIHYTANINLAFSSVIHILRDVPNGWIIQNLHAIGASMFFICIYTHIARGLYYGSYLNKEVWLSGTMLLIMLMATSFFGYVLPWGQMSFWAATVITNLLTAIPYLGTILTTWLWGGFSIDNPTLTRFFALHFILPFMIISLSSIHIILLHSEGSNNPLGTNPDTDKIPFHPYHSYKDTLMITAMITSMLIIMSFMPNLFNDPENFSKANPLVTPQHIKPEWYFLFAYGILRSIPNKLGGTLALLMSILILTTAPFTHTSYTRSMTFRPLTQIMFWTLIVTFITITWSATKPVEPPFIFISQTASIIYFSFFIINPLLGWVENKIMMTNN</sequence>